<reference key="1">
    <citation type="journal article" date="2000" name="DNA Res.">
        <title>Structural analysis of Arabidopsis thaliana chromosome 3. I. Sequence features of the regions of 4,504,864 bp covered by sixty P1 and TAC clones.</title>
        <authorList>
            <person name="Sato S."/>
            <person name="Nakamura Y."/>
            <person name="Kaneko T."/>
            <person name="Katoh T."/>
            <person name="Asamizu E."/>
            <person name="Tabata S."/>
        </authorList>
    </citation>
    <scope>NUCLEOTIDE SEQUENCE [LARGE SCALE GENOMIC DNA]</scope>
    <source>
        <strain>cv. Columbia</strain>
    </source>
</reference>
<reference key="2">
    <citation type="journal article" date="2017" name="Plant J.">
        <title>Araport11: a complete reannotation of the Arabidopsis thaliana reference genome.</title>
        <authorList>
            <person name="Cheng C.Y."/>
            <person name="Krishnakumar V."/>
            <person name="Chan A.P."/>
            <person name="Thibaud-Nissen F."/>
            <person name="Schobel S."/>
            <person name="Town C.D."/>
        </authorList>
    </citation>
    <scope>GENOME REANNOTATION</scope>
    <source>
        <strain>cv. Columbia</strain>
    </source>
</reference>
<reference key="3">
    <citation type="submission" date="2002-03" db="EMBL/GenBank/DDBJ databases">
        <title>Full-length cDNA from Arabidopsis thaliana.</title>
        <authorList>
            <person name="Brover V.V."/>
            <person name="Troukhan M.E."/>
            <person name="Alexandrov N.A."/>
            <person name="Lu Y.-P."/>
            <person name="Flavell R.B."/>
            <person name="Feldmann K.A."/>
        </authorList>
    </citation>
    <scope>NUCLEOTIDE SEQUENCE [LARGE SCALE MRNA]</scope>
</reference>
<reference key="4">
    <citation type="journal article" date="2003" name="Science">
        <title>Empirical analysis of transcriptional activity in the Arabidopsis genome.</title>
        <authorList>
            <person name="Yamada K."/>
            <person name="Lim J."/>
            <person name="Dale J.M."/>
            <person name="Chen H."/>
            <person name="Shinn P."/>
            <person name="Palm C.J."/>
            <person name="Southwick A.M."/>
            <person name="Wu H.C."/>
            <person name="Kim C.J."/>
            <person name="Nguyen M."/>
            <person name="Pham P.K."/>
            <person name="Cheuk R.F."/>
            <person name="Karlin-Newmann G."/>
            <person name="Liu S.X."/>
            <person name="Lam B."/>
            <person name="Sakano H."/>
            <person name="Wu T."/>
            <person name="Yu G."/>
            <person name="Miranda M."/>
            <person name="Quach H.L."/>
            <person name="Tripp M."/>
            <person name="Chang C.H."/>
            <person name="Lee J.M."/>
            <person name="Toriumi M.J."/>
            <person name="Chan M.M."/>
            <person name="Tang C.C."/>
            <person name="Onodera C.S."/>
            <person name="Deng J.M."/>
            <person name="Akiyama K."/>
            <person name="Ansari Y."/>
            <person name="Arakawa T."/>
            <person name="Banh J."/>
            <person name="Banno F."/>
            <person name="Bowser L."/>
            <person name="Brooks S.Y."/>
            <person name="Carninci P."/>
            <person name="Chao Q."/>
            <person name="Choy N."/>
            <person name="Enju A."/>
            <person name="Goldsmith A.D."/>
            <person name="Gurjal M."/>
            <person name="Hansen N.F."/>
            <person name="Hayashizaki Y."/>
            <person name="Johnson-Hopson C."/>
            <person name="Hsuan V.W."/>
            <person name="Iida K."/>
            <person name="Karnes M."/>
            <person name="Khan S."/>
            <person name="Koesema E."/>
            <person name="Ishida J."/>
            <person name="Jiang P.X."/>
            <person name="Jones T."/>
            <person name="Kawai J."/>
            <person name="Kamiya A."/>
            <person name="Meyers C."/>
            <person name="Nakajima M."/>
            <person name="Narusaka M."/>
            <person name="Seki M."/>
            <person name="Sakurai T."/>
            <person name="Satou M."/>
            <person name="Tamse R."/>
            <person name="Vaysberg M."/>
            <person name="Wallender E.K."/>
            <person name="Wong C."/>
            <person name="Yamamura Y."/>
            <person name="Yuan S."/>
            <person name="Shinozaki K."/>
            <person name="Davis R.W."/>
            <person name="Theologis A."/>
            <person name="Ecker J.R."/>
        </authorList>
    </citation>
    <scope>NUCLEOTIDE SEQUENCE [LARGE SCALE MRNA]</scope>
    <source>
        <strain>cv. Columbia</strain>
    </source>
</reference>
<reference key="5">
    <citation type="submission" date="2005-03" db="EMBL/GenBank/DDBJ databases">
        <title>Large-scale analysis of RIKEN Arabidopsis full-length (RAFL) cDNAs.</title>
        <authorList>
            <person name="Totoki Y."/>
            <person name="Seki M."/>
            <person name="Ishida J."/>
            <person name="Nakajima M."/>
            <person name="Enju A."/>
            <person name="Kamiya A."/>
            <person name="Narusaka M."/>
            <person name="Shin-i T."/>
            <person name="Nakagawa M."/>
            <person name="Sakamoto N."/>
            <person name="Oishi K."/>
            <person name="Kohara Y."/>
            <person name="Kobayashi M."/>
            <person name="Toyoda A."/>
            <person name="Sakaki Y."/>
            <person name="Sakurai T."/>
            <person name="Iida K."/>
            <person name="Akiyama K."/>
            <person name="Satou M."/>
            <person name="Toyoda T."/>
            <person name="Konagaya A."/>
            <person name="Carninci P."/>
            <person name="Kawai J."/>
            <person name="Hayashizaki Y."/>
            <person name="Shinozaki K."/>
        </authorList>
    </citation>
    <scope>NUCLEOTIDE SEQUENCE [LARGE SCALE MRNA] OF 30-352</scope>
    <source>
        <strain>cv. Columbia</strain>
    </source>
</reference>
<reference key="6">
    <citation type="journal article" date="2007" name="Nature">
        <title>JAZ repressor proteins are targets of the SCF(COI1) complex during jasmonate signalling.</title>
        <authorList>
            <person name="Thines B."/>
            <person name="Katsir L."/>
            <person name="Melotto M."/>
            <person name="Niu Y."/>
            <person name="Mandaokar A."/>
            <person name="Liu G."/>
            <person name="Nomura K."/>
            <person name="He S.Y."/>
            <person name="Howe G.A."/>
            <person name="Browse J."/>
        </authorList>
    </citation>
    <scope>FUNCTION</scope>
    <scope>INDUCTION BY JASMONATE</scope>
</reference>
<reference key="7">
    <citation type="journal article" date="2007" name="Nature">
        <title>The JAZ family of repressors is the missing link in jasmonate signalling.</title>
        <authorList>
            <person name="Chini A."/>
            <person name="Fonseca S."/>
            <person name="Fernandez G."/>
            <person name="Adie B."/>
            <person name="Chico J.M."/>
            <person name="Lorenzo O."/>
            <person name="Garcia-Casado G."/>
            <person name="Lopez-Vidriero I."/>
            <person name="Lozano F.M."/>
            <person name="Ponce M.R."/>
            <person name="Micol J.L."/>
            <person name="Solano R."/>
        </authorList>
    </citation>
    <scope>FUNCTION</scope>
    <scope>MUTAGENESIS OF 299-VAL--THR-312</scope>
    <scope>INTERACTION WITH COI1 AND MYC2</scope>
    <scope>GENE FAMILY</scope>
    <scope>NOMENCLATURE</scope>
</reference>
<reference key="8">
    <citation type="journal article" date="2007" name="Plant Cell">
        <title>A downstream mediator in the growth repression limb of the jasmonate pathway.</title>
        <authorList>
            <person name="Yan Y."/>
            <person name="Stolz S."/>
            <person name="Chetelat A."/>
            <person name="Reymond P."/>
            <person name="Pagni M."/>
            <person name="Dubugnon L."/>
            <person name="Farmer E.E."/>
        </authorList>
    </citation>
    <scope>DOMAIN</scope>
</reference>
<reference key="9">
    <citation type="journal article" date="2007" name="Trends Plant Sci.">
        <title>The tify family previously known as ZIM.</title>
        <authorList>
            <person name="Vanholme B."/>
            <person name="Grunewald W."/>
            <person name="Bateman A."/>
            <person name="Kohchi T."/>
            <person name="Gheysen G."/>
        </authorList>
    </citation>
    <scope>TISSUE SPECIFICITY</scope>
    <scope>GENE FAMILY</scope>
    <scope>NOMENCLATURE</scope>
</reference>
<reference key="10">
    <citation type="journal article" date="2008" name="Plant J.">
        <title>A critical role of two positively charged amino acids in the Jas motif of Arabidopsis JAZ proteins in mediating coronatine- and jasmonoyl isoleucine-dependent interactions with the COI1 F-box protein.</title>
        <authorList>
            <person name="Melotto M."/>
            <person name="Mecey C."/>
            <person name="Niu Y."/>
            <person name="Chung H.S."/>
            <person name="Katsir L."/>
            <person name="Yao J."/>
            <person name="Zeng W."/>
            <person name="Thines B."/>
            <person name="Staswick P."/>
            <person name="Browse J."/>
            <person name="Howe G.A."/>
            <person name="He S.Y."/>
        </authorList>
    </citation>
    <scope>INTERACTION WITH COI1</scope>
    <scope>DOMAIN</scope>
    <scope>SUBUNIT</scope>
</reference>
<reference key="11">
    <citation type="journal article" date="2008" name="Plant Physiol.">
        <title>Regulation and function of Arabidopsis JASMONATE ZIM-domain genes in response to wounding and herbivory.</title>
        <authorList>
            <person name="Chung H.S."/>
            <person name="Koo A.J."/>
            <person name="Gao X."/>
            <person name="Jayanty S."/>
            <person name="Thines B."/>
            <person name="Jones A.D."/>
            <person name="Howe G.A."/>
        </authorList>
    </citation>
    <scope>INDUCTION BY WOUNDING AND HERBIVORY</scope>
</reference>
<reference key="12">
    <citation type="journal article" date="2009" name="Plant Cell">
        <title>A critical role for the TIFY motif in repression of jasmonate signaling by a stabilized splice variant of the JASMONATE ZIM-domain protein JAZ10 in Arabidopsis.</title>
        <authorList>
            <person name="Chung H.S."/>
            <person name="Howe G.A."/>
        </authorList>
    </citation>
    <scope>FUNCTION</scope>
    <scope>INTERACTION WITH TIFY10A/JAZ1; TIFY10B/JAZ2; TIFY6A/JAZ4; TIFY5A/JAZ8; TIFY7/JAZ9; TIFY9/JAZ10 AND TIFY3A/JAZ11</scope>
    <scope>SUBUNIT</scope>
    <scope>SUBCELLULAR LOCATION</scope>
    <scope>DOMAIN</scope>
    <scope>MUTAGENESIS OF THR-180; ILE-181; PHE-182; TYR-183 AND GLY-185</scope>
</reference>
<reference key="13">
    <citation type="journal article" date="2009" name="Plant J.">
        <title>The ZIM domain mediates homo- and heteromeric interactions between Arabidopsis JAZ proteins.</title>
        <authorList>
            <person name="Chini A."/>
            <person name="Fonseca S."/>
            <person name="Chico J.M."/>
            <person name="Fernandez-Calvo P."/>
            <person name="Solano R."/>
        </authorList>
    </citation>
    <scope>INTERACTION WITH COI1 AND MYC2</scope>
    <scope>DOMAIN</scope>
    <scope>SUBUNIT</scope>
</reference>
<reference key="14">
    <citation type="journal article" date="2010" name="Nature">
        <title>NINJA connects the co-repressor TOPLESS to jasmonate signalling.</title>
        <authorList>
            <person name="Pauwels L."/>
            <person name="Barbero G.F."/>
            <person name="Geerinck J."/>
            <person name="Tilleman S."/>
            <person name="Grunewald W."/>
            <person name="Perez A.C."/>
            <person name="Chico J.M."/>
            <person name="Bossche R.V."/>
            <person name="Sewell J."/>
            <person name="Gil E."/>
            <person name="Garcia-Casado G."/>
            <person name="Witters E."/>
            <person name="Inze D."/>
            <person name="Long J.A."/>
            <person name="De Jaeger G."/>
            <person name="Solano R."/>
            <person name="Goossens A."/>
        </authorList>
    </citation>
    <scope>INTERACTION WITH AFPH2/NINJA</scope>
</reference>
<reference key="15">
    <citation type="journal article" date="2011" name="J. Exp. Bot.">
        <title>Characterization of JAZ-interacting bHLH transcription factors that regulate jasmonate responses in Arabidopsis.</title>
        <authorList>
            <person name="Niu Y."/>
            <person name="Figueroa P."/>
            <person name="Browse J."/>
        </authorList>
    </citation>
    <scope>INTERACTION WITH MYC2; MYC3 AND MYC4</scope>
</reference>
<reference key="16">
    <citation type="journal article" date="2011" name="Plant Cell">
        <title>The Arabidopsis bHLH transcription factors MYC3 and MYC4 are targets of JAZ repressors and act additively with MYC2 in the activation of jasmonate responses.</title>
        <authorList>
            <person name="Fernandez-Calvo P."/>
            <person name="Chini A."/>
            <person name="Fernandez-Barbero G."/>
            <person name="Chico J.M."/>
            <person name="Gimenez-Ibanez S."/>
            <person name="Geerinck J."/>
            <person name="Eeckhout D."/>
            <person name="Schweizer F."/>
            <person name="Godoy M."/>
            <person name="Franco-Zorrilla J.M."/>
            <person name="Pauwels L."/>
            <person name="Witters E."/>
            <person name="Puga M.I."/>
            <person name="Paz-Ares J."/>
            <person name="Goossens A."/>
            <person name="Reymond P."/>
            <person name="De Jaeger G."/>
            <person name="Solano R."/>
        </authorList>
    </citation>
    <scope>FUNCTION</scope>
    <scope>INTERACTION WITH MYC2; MYC3; MYC4 AND AFPH2/NINJA</scope>
    <scope>SUBUNIT</scope>
</reference>
<keyword id="KW-0025">Alternative splicing</keyword>
<keyword id="KW-1184">Jasmonic acid signaling pathway</keyword>
<keyword id="KW-0539">Nucleus</keyword>
<keyword id="KW-0611">Plant defense</keyword>
<keyword id="KW-1185">Reference proteome</keyword>
<keyword id="KW-0804">Transcription</keyword>
<keyword id="KW-0805">Transcription regulation</keyword>
<keyword id="KW-0832">Ubl conjugation</keyword>
<accession>Q9LVI4</accession>
<accession>Q56W78</accession>
<accession>Q8LF26</accession>
<name>TIF6B_ARATH</name>
<sequence length="352" mass="37746">MERDFLGLGSKNSPITVKEETSESSRDSAPNRGMNWSFSNKVSASSSQFLSFRPTQEDRHRKSGNYHLPHSGSFMPSSVADVYDSTRKAPYSSVQGVRMFPNSNQHEETNAVSMSMPGFQSHHYAPGGRSFMNNNNNSQPLVGVPIMAPPISILPPPGSIVGTTDIRSSSKPIGSPAQLTIFYAGSVCVYDDISPEKAKAIMLLAGNGSSMPQVFSPPQTHQQVVHHTRASVDSSAMPPSFMPTISYLSPEAGSSTNGLGATKATRGLTSTYHNNQANGSNINCPVPVSCSTNVMAPTVALPLARKASLARFLEKRKERVTSVSPYCLDKKSSTDCRRSMSECISSSLSSAT</sequence>
<dbReference type="EMBL" id="AB019230">
    <property type="protein sequence ID" value="BAB02709.1"/>
    <property type="molecule type" value="Genomic_DNA"/>
</dbReference>
<dbReference type="EMBL" id="CP002686">
    <property type="protein sequence ID" value="AEE76016.1"/>
    <property type="molecule type" value="Genomic_DNA"/>
</dbReference>
<dbReference type="EMBL" id="AY085082">
    <property type="protein sequence ID" value="AAM67301.1"/>
    <property type="molecule type" value="mRNA"/>
</dbReference>
<dbReference type="EMBL" id="AF372907">
    <property type="protein sequence ID" value="AAK49623.1"/>
    <property type="molecule type" value="mRNA"/>
</dbReference>
<dbReference type="EMBL" id="BT003044">
    <property type="protein sequence ID" value="AAO23609.1"/>
    <property type="molecule type" value="mRNA"/>
</dbReference>
<dbReference type="EMBL" id="AK222169">
    <property type="protein sequence ID" value="BAD95285.1"/>
    <property type="status" value="ALT_INIT"/>
    <property type="molecule type" value="mRNA"/>
</dbReference>
<dbReference type="RefSeq" id="NP_001078174.1">
    <property type="nucleotide sequence ID" value="NM_001084705.3"/>
</dbReference>
<dbReference type="RefSeq" id="NP_001327107.1">
    <property type="nucleotide sequence ID" value="NM_001338310.1"/>
</dbReference>
<dbReference type="RefSeq" id="NP_566590.1">
    <molecule id="Q9LVI4-1"/>
    <property type="nucleotide sequence ID" value="NM_112667.4"/>
</dbReference>
<dbReference type="SMR" id="Q9LVI4"/>
<dbReference type="BioGRID" id="6388">
    <property type="interactions" value="56"/>
</dbReference>
<dbReference type="DIP" id="DIP-40532N"/>
<dbReference type="ELM" id="Q9LVI4"/>
<dbReference type="FunCoup" id="Q9LVI4">
    <property type="interactions" value="597"/>
</dbReference>
<dbReference type="IntAct" id="Q9LVI4">
    <property type="interactions" value="60"/>
</dbReference>
<dbReference type="STRING" id="3702.Q9LVI4"/>
<dbReference type="PaxDb" id="3702-AT3G17860.1"/>
<dbReference type="ProteomicsDB" id="234278">
    <molecule id="Q9LVI4-1"/>
</dbReference>
<dbReference type="EnsemblPlants" id="AT3G17860.1">
    <molecule id="Q9LVI4-1"/>
    <property type="protein sequence ID" value="AT3G17860.1"/>
    <property type="gene ID" value="AT3G17860"/>
</dbReference>
<dbReference type="GeneID" id="821055"/>
<dbReference type="Gramene" id="AT3G17860.1">
    <molecule id="Q9LVI4-1"/>
    <property type="protein sequence ID" value="AT3G17860.1"/>
    <property type="gene ID" value="AT3G17860"/>
</dbReference>
<dbReference type="KEGG" id="ath:AT3G17860"/>
<dbReference type="Araport" id="AT3G17860"/>
<dbReference type="TAIR" id="AT3G17860">
    <property type="gene designation" value="JAZ3"/>
</dbReference>
<dbReference type="eggNOG" id="ENOG502QWAG">
    <property type="taxonomic scope" value="Eukaryota"/>
</dbReference>
<dbReference type="HOGENOM" id="CLU_062327_0_0_1"/>
<dbReference type="InParanoid" id="Q9LVI4"/>
<dbReference type="OMA" id="GMKWSFP"/>
<dbReference type="PhylomeDB" id="Q9LVI4"/>
<dbReference type="PRO" id="PR:Q9LVI4"/>
<dbReference type="Proteomes" id="UP000006548">
    <property type="component" value="Chromosome 3"/>
</dbReference>
<dbReference type="ExpressionAtlas" id="Q9LVI4">
    <property type="expression patterns" value="baseline and differential"/>
</dbReference>
<dbReference type="GO" id="GO:0005634">
    <property type="term" value="C:nucleus"/>
    <property type="evidence" value="ECO:0007669"/>
    <property type="project" value="UniProtKB-SubCell"/>
</dbReference>
<dbReference type="GO" id="GO:0042802">
    <property type="term" value="F:identical protein binding"/>
    <property type="evidence" value="ECO:0000353"/>
    <property type="project" value="IntAct"/>
</dbReference>
<dbReference type="GO" id="GO:0006952">
    <property type="term" value="P:defense response"/>
    <property type="evidence" value="ECO:0007669"/>
    <property type="project" value="UniProtKB-KW"/>
</dbReference>
<dbReference type="GO" id="GO:0009867">
    <property type="term" value="P:jasmonic acid mediated signaling pathway"/>
    <property type="evidence" value="ECO:0000315"/>
    <property type="project" value="TAIR"/>
</dbReference>
<dbReference type="GO" id="GO:0031347">
    <property type="term" value="P:regulation of defense response"/>
    <property type="evidence" value="ECO:0000315"/>
    <property type="project" value="TAIR"/>
</dbReference>
<dbReference type="InterPro" id="IPR018467">
    <property type="entry name" value="CCT_CS"/>
</dbReference>
<dbReference type="InterPro" id="IPR040390">
    <property type="entry name" value="TIFY/JAZ"/>
</dbReference>
<dbReference type="InterPro" id="IPR010399">
    <property type="entry name" value="Tify_dom"/>
</dbReference>
<dbReference type="PANTHER" id="PTHR33077">
    <property type="entry name" value="PROTEIN TIFY 4A-RELATED-RELATED"/>
    <property type="match status" value="1"/>
</dbReference>
<dbReference type="PANTHER" id="PTHR33077:SF151">
    <property type="entry name" value="PROTEIN TIFY 6A-RELATED"/>
    <property type="match status" value="1"/>
</dbReference>
<dbReference type="Pfam" id="PF09425">
    <property type="entry name" value="Jas_motif"/>
    <property type="match status" value="1"/>
</dbReference>
<dbReference type="Pfam" id="PF06200">
    <property type="entry name" value="tify"/>
    <property type="match status" value="1"/>
</dbReference>
<dbReference type="SMART" id="SM00979">
    <property type="entry name" value="TIFY"/>
    <property type="match status" value="1"/>
</dbReference>
<dbReference type="PROSITE" id="PS51320">
    <property type="entry name" value="TIFY"/>
    <property type="match status" value="1"/>
</dbReference>
<gene>
    <name type="primary">TIFY6B</name>
    <name type="synonym">JAI3</name>
    <name type="synonym">JAZ3</name>
    <name type="ordered locus">At3g17860</name>
    <name type="ORF">MEB5.8</name>
</gene>
<evidence type="ECO:0000250" key="1">
    <source>
        <dbReference type="UniProtKB" id="Q7XPM8"/>
    </source>
</evidence>
<evidence type="ECO:0000255" key="2"/>
<evidence type="ECO:0000255" key="3">
    <source>
        <dbReference type="PROSITE-ProRule" id="PRU00650"/>
    </source>
</evidence>
<evidence type="ECO:0000255" key="4">
    <source>
        <dbReference type="PROSITE-ProRule" id="PRU00768"/>
    </source>
</evidence>
<evidence type="ECO:0000256" key="5">
    <source>
        <dbReference type="SAM" id="MobiDB-lite"/>
    </source>
</evidence>
<evidence type="ECO:0000269" key="6">
    <source>
    </source>
</evidence>
<evidence type="ECO:0000269" key="7">
    <source>
    </source>
</evidence>
<evidence type="ECO:0000269" key="8">
    <source>
    </source>
</evidence>
<evidence type="ECO:0000269" key="9">
    <source>
    </source>
</evidence>
<evidence type="ECO:0000269" key="10">
    <source>
    </source>
</evidence>
<evidence type="ECO:0000269" key="11">
    <source>
    </source>
</evidence>
<evidence type="ECO:0000269" key="12">
    <source>
    </source>
</evidence>
<evidence type="ECO:0000269" key="13">
    <source>
    </source>
</evidence>
<evidence type="ECO:0000269" key="14">
    <source>
    </source>
</evidence>
<evidence type="ECO:0000269" key="15">
    <source>
    </source>
</evidence>
<evidence type="ECO:0000305" key="16"/>
<protein>
    <recommendedName>
        <fullName>Protein TIFY 6B</fullName>
    </recommendedName>
    <alternativeName>
        <fullName>Jasmonate ZIM domain-containing protein 3</fullName>
    </alternativeName>
    <alternativeName>
        <fullName>Protein JASMONATE INSENSITIVE 3</fullName>
    </alternativeName>
</protein>
<organism>
    <name type="scientific">Arabidopsis thaliana</name>
    <name type="common">Mouse-ear cress</name>
    <dbReference type="NCBI Taxonomy" id="3702"/>
    <lineage>
        <taxon>Eukaryota</taxon>
        <taxon>Viridiplantae</taxon>
        <taxon>Streptophyta</taxon>
        <taxon>Embryophyta</taxon>
        <taxon>Tracheophyta</taxon>
        <taxon>Spermatophyta</taxon>
        <taxon>Magnoliopsida</taxon>
        <taxon>eudicotyledons</taxon>
        <taxon>Gunneridae</taxon>
        <taxon>Pentapetalae</taxon>
        <taxon>rosids</taxon>
        <taxon>malvids</taxon>
        <taxon>Brassicales</taxon>
        <taxon>Brassicaceae</taxon>
        <taxon>Camelineae</taxon>
        <taxon>Arabidopsis</taxon>
    </lineage>
</organism>
<feature type="chain" id="PRO_0000300648" description="Protein TIFY 6B">
    <location>
        <begin position="1"/>
        <end position="352"/>
    </location>
</feature>
<feature type="domain" description="Tify" evidence="3">
    <location>
        <begin position="172"/>
        <end position="207"/>
    </location>
</feature>
<feature type="region of interest" description="Disordered" evidence="5">
    <location>
        <begin position="1"/>
        <end position="71"/>
    </location>
</feature>
<feature type="short sequence motif" description="Jas" evidence="2">
    <location>
        <begin position="302"/>
        <end position="326"/>
    </location>
</feature>
<feature type="short sequence motif" description="Nuclear localization signal" evidence="4">
    <location>
        <begin position="304"/>
        <end position="311"/>
    </location>
</feature>
<feature type="compositionally biased region" description="Basic and acidic residues" evidence="5">
    <location>
        <begin position="17"/>
        <end position="26"/>
    </location>
</feature>
<feature type="compositionally biased region" description="Polar residues" evidence="5">
    <location>
        <begin position="34"/>
        <end position="54"/>
    </location>
</feature>
<feature type="mutagenesis site" description="No effect on dimerization." evidence="11">
    <original>T</original>
    <variation>A</variation>
    <location>
        <position position="180"/>
    </location>
</feature>
<feature type="mutagenesis site" description="No effect on dimerization, but loss of interaction with TIFY9/JAZ10." evidence="11">
    <original>I</original>
    <variation>A</variation>
    <location>
        <position position="181"/>
    </location>
</feature>
<feature type="mutagenesis site" description="No effect on dimerization." evidence="11">
    <original>F</original>
    <variation>A</variation>
    <location>
        <position position="182"/>
    </location>
</feature>
<feature type="mutagenesis site" description="No effect on dimerization." evidence="11">
    <original>Y</original>
    <variation>A</variation>
    <location>
        <position position="183"/>
    </location>
</feature>
<feature type="mutagenesis site" description="Loss of dimerization and loss of interaction with TIFY9/JAZ10." evidence="11">
    <original>G</original>
    <variation>A</variation>
    <location>
        <position position="185"/>
    </location>
</feature>
<feature type="mutagenesis site" description="In jai3-1; dominant mutation that confers jasmonate insensitivity." evidence="7">
    <original>VALPLARKASLARF</original>
    <variation>GKKQSQRPDTTFAI</variation>
    <location>
        <begin position="299"/>
        <end position="312"/>
    </location>
</feature>
<feature type="mutagenesis site" description="In jai3-1; dominant mutation that confers jasmonate insensitivity.">
    <location>
        <begin position="313"/>
        <end position="352"/>
    </location>
</feature>
<feature type="sequence conflict" description="In Ref. 3; AAM67301." evidence="16" ref="3">
    <original>S</original>
    <variation>R</variation>
    <location>
        <position position="22"/>
    </location>
</feature>
<proteinExistence type="evidence at protein level"/>
<comment type="function">
    <text evidence="7 8 11 15">Repressor of jasmonate responses. Jasmonoyl-isoleucine (JA-Ile) specifically promotes COI1-TIFY6B/JAZ3 interaction. Acts as a negative regulator of MYC2 function. Feed-back regulated by MYC2.</text>
</comment>
<comment type="subunit">
    <text evidence="7 10 11 12 13 14 15">Homo- and heterodimer. Interacts with COI1, MYC2, MYC3, MYC4, TIFY10A/JAZ1, TIFY10B/JAZ2, TIFY6A/JAZ4, TIFY5A/JAZ8, TIFY7/JAZ9, TIFY9/JAZ10 and TIFY3A/JAZ11. Interacts (via TIFY domain) with AFPH2/NINJA.</text>
</comment>
<comment type="interaction">
    <interactant intactId="EBI-1792431">
        <id>Q9LVI4</id>
    </interactant>
    <interactant intactId="EBI-1787005">
        <id>Q9SV55</id>
        <label>AFPH2</label>
    </interactant>
    <organismsDiffer>false</organismsDiffer>
    <experiments>3</experiments>
</comment>
<comment type="interaction">
    <interactant intactId="EBI-1792431">
        <id>Q9LVI4</id>
    </interactant>
    <interactant intactId="EBI-4434261">
        <id>Q9LNJ5</id>
        <label>BHLH13</label>
    </interactant>
    <organismsDiffer>false</organismsDiffer>
    <experiments>5</experiments>
</comment>
<comment type="interaction">
    <interactant intactId="EBI-1792431">
        <id>Q9LVI4</id>
    </interactant>
    <interactant intactId="EBI-401159">
        <id>O04197</id>
        <label>COI1</label>
    </interactant>
    <organismsDiffer>false</organismsDiffer>
    <experiments>6</experiments>
</comment>
<comment type="interaction">
    <interactant intactId="EBI-1792431">
        <id>Q9LVI4</id>
    </interactant>
    <interactant intactId="EBI-4448729">
        <id>Q9ZVC9</id>
        <label>FRS3</label>
    </interactant>
    <organismsDiffer>false</organismsDiffer>
    <experiments>4</experiments>
</comment>
<comment type="interaction">
    <interactant intactId="EBI-1792431">
        <id>Q9LVI4</id>
    </interactant>
    <interactant intactId="EBI-963606">
        <id>Q9LQT8</id>
        <label>GAI</label>
    </interactant>
    <organismsDiffer>false</organismsDiffer>
    <experiments>3</experiments>
</comment>
<comment type="interaction">
    <interactant intactId="EBI-1792431">
        <id>Q9LVI4</id>
    </interactant>
    <interactant intactId="EBI-1792336">
        <id>Q39204</id>
        <label>MYC2</label>
    </interactant>
    <organismsDiffer>false</organismsDiffer>
    <experiments>7</experiments>
</comment>
<comment type="interaction">
    <interactant intactId="EBI-1792431">
        <id>Q9LVI4</id>
    </interactant>
    <interactant intactId="EBI-15406909">
        <id>O49687</id>
        <label>MYC4</label>
    </interactant>
    <organismsDiffer>false</organismsDiffer>
    <experiments>3</experiments>
</comment>
<comment type="interaction">
    <interactant intactId="EBI-1792431">
        <id>Q9LVI4</id>
    </interactant>
    <interactant intactId="EBI-25522702">
        <id>A4FVP6</id>
        <label>NAC016</label>
    </interactant>
    <organismsDiffer>false</organismsDiffer>
    <experiments>3</experiments>
</comment>
<comment type="interaction">
    <interactant intactId="EBI-1792431">
        <id>Q9LVI4</id>
    </interactant>
    <interactant intactId="EBI-15191931">
        <id>Q9M126</id>
        <label>NAC69</label>
    </interactant>
    <organismsDiffer>false</organismsDiffer>
    <experiments>3</experiments>
</comment>
<comment type="interaction">
    <interactant intactId="EBI-1792431">
        <id>Q9LVI4</id>
    </interactant>
    <interactant intactId="EBI-4426144">
        <id>Q9C9L2</id>
        <label>TCP15</label>
    </interactant>
    <organismsDiffer>false</organismsDiffer>
    <experiments>3</experiments>
</comment>
<comment type="interaction">
    <interactant intactId="EBI-1792431">
        <id>Q9LVI4</id>
    </interactant>
    <interactant intactId="EBI-25522447">
        <id>Q9MAH8</id>
        <label>TCP3</label>
    </interactant>
    <organismsDiffer>false</organismsDiffer>
    <experiments>3</experiments>
</comment>
<comment type="interaction">
    <interactant intactId="EBI-1792431">
        <id>Q9LVI4</id>
    </interactant>
    <interactant intactId="EBI-1388539">
        <id>Q9LMA8</id>
        <label>TIFY10A</label>
    </interactant>
    <organismsDiffer>false</organismsDiffer>
    <experiments>2</experiments>
</comment>
<comment type="interaction">
    <interactant intactId="EBI-1792431">
        <id>Q9LVI4</id>
    </interactant>
    <interactant intactId="EBI-15206004">
        <id>Q8GY55</id>
        <label>TIFY4B</label>
    </interactant>
    <organismsDiffer>false</organismsDiffer>
    <experiments>3</experiments>
</comment>
<comment type="interaction">
    <interactant intactId="EBI-1792431">
        <id>Q9LVI4</id>
    </interactant>
    <interactant intactId="EBI-2312053">
        <id>Q58G47</id>
        <label>TIFY6A</label>
    </interactant>
    <organismsDiffer>false</organismsDiffer>
    <experiments>3</experiments>
</comment>
<comment type="interaction">
    <interactant intactId="EBI-1792431">
        <id>Q9LVI4</id>
    </interactant>
    <interactant intactId="EBI-1792431">
        <id>Q9LVI4</id>
        <label>TIFY6B</label>
    </interactant>
    <organismsDiffer>false</organismsDiffer>
    <experiments>8</experiments>
</comment>
<comment type="interaction">
    <interactant intactId="EBI-1792431">
        <id>Q9LVI4</id>
    </interactant>
    <interactant intactId="EBI-1792583">
        <id>Q8W4J8</id>
        <label>TIFY7</label>
    </interactant>
    <organismsDiffer>false</organismsDiffer>
    <experiments>4</experiments>
</comment>
<comment type="interaction">
    <interactant intactId="EBI-1792431">
        <id>Q9LVI4</id>
    </interactant>
    <interactant intactId="EBI-4426557">
        <id>Q84MB2</id>
        <label>TIFY8</label>
    </interactant>
    <organismsDiffer>false</organismsDiffer>
    <experiments>3</experiments>
</comment>
<comment type="interaction">
    <interactant intactId="EBI-1792431">
        <id>Q9LVI4</id>
    </interactant>
    <interactant intactId="EBI-1113627">
        <id>O22152</id>
        <label>YAB1</label>
    </interactant>
    <organismsDiffer>false</organismsDiffer>
    <experiments>3</experiments>
</comment>
<comment type="interaction">
    <interactant intactId="EBI-1792431">
        <id>Q9LVI4</id>
    </interactant>
    <interactant intactId="EBI-1115523">
        <id>Q9LDT3</id>
        <label>YAB4</label>
    </interactant>
    <organismsDiffer>false</organismsDiffer>
    <experiments>5</experiments>
</comment>
<comment type="subcellular location">
    <subcellularLocation>
        <location evidence="4 11">Nucleus</location>
    </subcellularLocation>
</comment>
<comment type="alternative products">
    <event type="alternative splicing"/>
    <isoform>
        <id>Q9LVI4-1</id>
        <name>1</name>
        <sequence type="displayed"/>
    </isoform>
    <text>A number of isoforms are produced. According to EST sequences.</text>
</comment>
<comment type="tissue specificity">
    <text evidence="6">Srtongly expressed in root tips.</text>
</comment>
<comment type="induction">
    <text evidence="8 9">Up-regulated by jasmonate, wounding and herbivory.</text>
</comment>
<comment type="domain">
    <text evidence="11">The tify domain is required for homo- and heterodimerization and for the interaction with other TIFY proteins.</text>
</comment>
<comment type="domain">
    <text evidence="12">The jas domain (302-326) is necessary and sufficient for the hormone dependent interaction with COI1 and the hormone independent interaction with MYC2.</text>
</comment>
<comment type="PTM">
    <text evidence="1">Ubiquitinated. Targeted for degradation by the SCF(COI1) E3 ubiquitin ligase-proteasome pathway during jasmonate signaling.</text>
</comment>
<comment type="similarity">
    <text evidence="16">Belongs to the TIFY/JAZ family.</text>
</comment>
<comment type="caution">
    <text evidence="16">PubMed:17637675 showed that COI1 interacts with the N-terminal part of the protein (1-208), but not with its C terminus.</text>
</comment>
<comment type="sequence caution" evidence="16">
    <conflict type="erroneous initiation">
        <sequence resource="EMBL-CDS" id="BAD95285"/>
    </conflict>
    <text>Truncated N-terminus.</text>
</comment>